<organism>
    <name type="scientific">Cronobacter sakazakii (strain ATCC BAA-894)</name>
    <name type="common">Enterobacter sakazakii</name>
    <dbReference type="NCBI Taxonomy" id="290339"/>
    <lineage>
        <taxon>Bacteria</taxon>
        <taxon>Pseudomonadati</taxon>
        <taxon>Pseudomonadota</taxon>
        <taxon>Gammaproteobacteria</taxon>
        <taxon>Enterobacterales</taxon>
        <taxon>Enterobacteriaceae</taxon>
        <taxon>Cronobacter</taxon>
    </lineage>
</organism>
<evidence type="ECO:0000255" key="1">
    <source>
        <dbReference type="HAMAP-Rule" id="MF_00414"/>
    </source>
</evidence>
<name>UBIB_CROS8</name>
<feature type="chain" id="PRO_1000050042" description="Probable protein kinase UbiB">
    <location>
        <begin position="1"/>
        <end position="546"/>
    </location>
</feature>
<feature type="transmembrane region" description="Helical" evidence="1">
    <location>
        <begin position="501"/>
        <end position="518"/>
    </location>
</feature>
<feature type="transmembrane region" description="Helical" evidence="1">
    <location>
        <begin position="523"/>
        <end position="542"/>
    </location>
</feature>
<feature type="domain" description="Protein kinase" evidence="1">
    <location>
        <begin position="124"/>
        <end position="502"/>
    </location>
</feature>
<feature type="active site" description="Proton acceptor" evidence="1">
    <location>
        <position position="288"/>
    </location>
</feature>
<feature type="binding site" evidence="1">
    <location>
        <begin position="130"/>
        <end position="138"/>
    </location>
    <ligand>
        <name>ATP</name>
        <dbReference type="ChEBI" id="CHEBI:30616"/>
    </ligand>
</feature>
<feature type="binding site" evidence="1">
    <location>
        <position position="153"/>
    </location>
    <ligand>
        <name>ATP</name>
        <dbReference type="ChEBI" id="CHEBI:30616"/>
    </ligand>
</feature>
<comment type="function">
    <text evidence="1">Is probably a protein kinase regulator of UbiI activity which is involved in aerobic coenzyme Q (ubiquinone) biosynthesis.</text>
</comment>
<comment type="pathway">
    <text>Cofactor biosynthesis; ubiquinone biosynthesis [regulation].</text>
</comment>
<comment type="subcellular location">
    <subcellularLocation>
        <location evidence="1">Cell inner membrane</location>
        <topology evidence="1">Multi-pass membrane protein</topology>
    </subcellularLocation>
</comment>
<comment type="similarity">
    <text evidence="1">Belongs to the ABC1 family. UbiB subfamily.</text>
</comment>
<keyword id="KW-0067">ATP-binding</keyword>
<keyword id="KW-0997">Cell inner membrane</keyword>
<keyword id="KW-1003">Cell membrane</keyword>
<keyword id="KW-0418">Kinase</keyword>
<keyword id="KW-0472">Membrane</keyword>
<keyword id="KW-0547">Nucleotide-binding</keyword>
<keyword id="KW-1185">Reference proteome</keyword>
<keyword id="KW-0808">Transferase</keyword>
<keyword id="KW-0812">Transmembrane</keyword>
<keyword id="KW-1133">Transmembrane helix</keyword>
<keyword id="KW-0831">Ubiquinone biosynthesis</keyword>
<sequence length="546" mass="63342">MTPGEIRRLYFIIKTFLSYGLDELIPRMRLTLPLRIWRRGLFWMPNRHKDLELGTRLRLALQELGPVWIKFGQMLSTRRDLFPPVIADQLALLQDRVAPFDGKLAKQQIEKAMGDRPVEEWFDDFDITPLASASIAQVHTARLKENGKEVVIKVIRPDILPVIKADMKLIYRLARWVPRLLPDGRRLRPMEVVREYEKTLLDELDLLREAANAIQLRRNFENSPMLYVPEVYSDYCSPTMMVMERIYGIPVNDVAALEANGTDMKLLAERGVQVFFTQVFRDSFFHGDMHPGNIFVSHDHPHDPQYIGIDCGIVGSLNKEDKRYLAENFIAFFNRDYRRVAELHVDSGWVPPDTNVEEFESAIRTVCEPIFEKPLAEISFGHVLLNLFNTARRFNMEVQPQLVLLQKTLLYIEGVGRQLYPQLDLWKTAKPFLESWIKDQVGFPALVRSFKEKAPFWAEKIPEIPELVYNSLRQGKQLQQSVDKIAHELQEHRVKQGQSRYLFGIGATLMLSSTLLFINRPDWGMSPGWLMAGGILVWLIGWRRTD</sequence>
<gene>
    <name evidence="1" type="primary">ubiB</name>
    <name type="ordered locus">ESA_03725</name>
</gene>
<reference key="1">
    <citation type="journal article" date="2010" name="PLoS ONE">
        <title>Genome sequence of Cronobacter sakazakii BAA-894 and comparative genomic hybridization analysis with other Cronobacter species.</title>
        <authorList>
            <person name="Kucerova E."/>
            <person name="Clifton S.W."/>
            <person name="Xia X.Q."/>
            <person name="Long F."/>
            <person name="Porwollik S."/>
            <person name="Fulton L."/>
            <person name="Fronick C."/>
            <person name="Minx P."/>
            <person name="Kyung K."/>
            <person name="Warren W."/>
            <person name="Fulton R."/>
            <person name="Feng D."/>
            <person name="Wollam A."/>
            <person name="Shah N."/>
            <person name="Bhonagiri V."/>
            <person name="Nash W.E."/>
            <person name="Hallsworth-Pepin K."/>
            <person name="Wilson R.K."/>
            <person name="McClelland M."/>
            <person name="Forsythe S.J."/>
        </authorList>
    </citation>
    <scope>NUCLEOTIDE SEQUENCE [LARGE SCALE GENOMIC DNA]</scope>
    <source>
        <strain>ATCC BAA-894</strain>
    </source>
</reference>
<protein>
    <recommendedName>
        <fullName evidence="1">Probable protein kinase UbiB</fullName>
        <ecNumber evidence="1">2.7.-.-</ecNumber>
    </recommendedName>
    <alternativeName>
        <fullName evidence="1">Ubiquinone biosynthesis protein UbiB</fullName>
    </alternativeName>
</protein>
<dbReference type="EC" id="2.7.-.-" evidence="1"/>
<dbReference type="EMBL" id="CP000783">
    <property type="protein sequence ID" value="ABU78922.1"/>
    <property type="molecule type" value="Genomic_DNA"/>
</dbReference>
<dbReference type="RefSeq" id="WP_007891403.1">
    <property type="nucleotide sequence ID" value="NC_009778.1"/>
</dbReference>
<dbReference type="SMR" id="A7MQL5"/>
<dbReference type="GeneID" id="56732378"/>
<dbReference type="KEGG" id="esa:ESA_03725"/>
<dbReference type="HOGENOM" id="CLU_006533_0_0_6"/>
<dbReference type="UniPathway" id="UPA00232"/>
<dbReference type="Proteomes" id="UP000000260">
    <property type="component" value="Chromosome"/>
</dbReference>
<dbReference type="GO" id="GO:0005886">
    <property type="term" value="C:plasma membrane"/>
    <property type="evidence" value="ECO:0007669"/>
    <property type="project" value="UniProtKB-SubCell"/>
</dbReference>
<dbReference type="GO" id="GO:0005524">
    <property type="term" value="F:ATP binding"/>
    <property type="evidence" value="ECO:0007669"/>
    <property type="project" value="UniProtKB-KW"/>
</dbReference>
<dbReference type="GO" id="GO:0004672">
    <property type="term" value="F:protein kinase activity"/>
    <property type="evidence" value="ECO:0007669"/>
    <property type="project" value="UniProtKB-UniRule"/>
</dbReference>
<dbReference type="GO" id="GO:0010795">
    <property type="term" value="P:regulation of ubiquinone biosynthetic process"/>
    <property type="evidence" value="ECO:0007669"/>
    <property type="project" value="UniProtKB-UniRule"/>
</dbReference>
<dbReference type="GO" id="GO:0006744">
    <property type="term" value="P:ubiquinone biosynthetic process"/>
    <property type="evidence" value="ECO:0007669"/>
    <property type="project" value="UniProtKB-UniPathway"/>
</dbReference>
<dbReference type="CDD" id="cd13972">
    <property type="entry name" value="UbiB"/>
    <property type="match status" value="1"/>
</dbReference>
<dbReference type="HAMAP" id="MF_00414">
    <property type="entry name" value="UbiB"/>
    <property type="match status" value="1"/>
</dbReference>
<dbReference type="InterPro" id="IPR004147">
    <property type="entry name" value="ABC1_dom"/>
</dbReference>
<dbReference type="InterPro" id="IPR011009">
    <property type="entry name" value="Kinase-like_dom_sf"/>
</dbReference>
<dbReference type="InterPro" id="IPR010232">
    <property type="entry name" value="UbiB"/>
</dbReference>
<dbReference type="InterPro" id="IPR045308">
    <property type="entry name" value="UbiB_bact"/>
</dbReference>
<dbReference type="InterPro" id="IPR050154">
    <property type="entry name" value="UbiB_kinase"/>
</dbReference>
<dbReference type="NCBIfam" id="NF003404">
    <property type="entry name" value="PRK04750.1"/>
    <property type="match status" value="1"/>
</dbReference>
<dbReference type="NCBIfam" id="TIGR01982">
    <property type="entry name" value="UbiB"/>
    <property type="match status" value="1"/>
</dbReference>
<dbReference type="PANTHER" id="PTHR10566">
    <property type="entry name" value="CHAPERONE-ACTIVITY OF BC1 COMPLEX CABC1 -RELATED"/>
    <property type="match status" value="1"/>
</dbReference>
<dbReference type="PANTHER" id="PTHR10566:SF113">
    <property type="entry name" value="PROTEIN ACTIVITY OF BC1 COMPLEX KINASE 7, CHLOROPLASTIC"/>
    <property type="match status" value="1"/>
</dbReference>
<dbReference type="Pfam" id="PF03109">
    <property type="entry name" value="ABC1"/>
    <property type="match status" value="1"/>
</dbReference>
<dbReference type="SUPFAM" id="SSF56112">
    <property type="entry name" value="Protein kinase-like (PK-like)"/>
    <property type="match status" value="1"/>
</dbReference>
<accession>A7MQL5</accession>
<proteinExistence type="inferred from homology"/>